<protein>
    <recommendedName>
        <fullName evidence="1">Large ribosomal subunit protein bL33</fullName>
    </recommendedName>
    <alternativeName>
        <fullName evidence="2">50S ribosomal protein L33</fullName>
    </alternativeName>
</protein>
<gene>
    <name evidence="1" type="primary">rpmG</name>
    <name type="ordered locus">Amet_4493</name>
</gene>
<proteinExistence type="inferred from homology"/>
<reference key="1">
    <citation type="journal article" date="2016" name="Genome Announc.">
        <title>Complete genome sequence of Alkaliphilus metalliredigens strain QYMF, an alkaliphilic and metal-reducing bacterium isolated from borax-contaminated leachate ponds.</title>
        <authorList>
            <person name="Hwang C."/>
            <person name="Copeland A."/>
            <person name="Lucas S."/>
            <person name="Lapidus A."/>
            <person name="Barry K."/>
            <person name="Detter J.C."/>
            <person name="Glavina Del Rio T."/>
            <person name="Hammon N."/>
            <person name="Israni S."/>
            <person name="Dalin E."/>
            <person name="Tice H."/>
            <person name="Pitluck S."/>
            <person name="Chertkov O."/>
            <person name="Brettin T."/>
            <person name="Bruce D."/>
            <person name="Han C."/>
            <person name="Schmutz J."/>
            <person name="Larimer F."/>
            <person name="Land M.L."/>
            <person name="Hauser L."/>
            <person name="Kyrpides N."/>
            <person name="Mikhailova N."/>
            <person name="Ye Q."/>
            <person name="Zhou J."/>
            <person name="Richardson P."/>
            <person name="Fields M.W."/>
        </authorList>
    </citation>
    <scope>NUCLEOTIDE SEQUENCE [LARGE SCALE GENOMIC DNA]</scope>
    <source>
        <strain>QYMF</strain>
    </source>
</reference>
<feature type="chain" id="PRO_0000356369" description="Large ribosomal subunit protein bL33">
    <location>
        <begin position="1"/>
        <end position="49"/>
    </location>
</feature>
<dbReference type="EMBL" id="CP000724">
    <property type="protein sequence ID" value="ABR50565.1"/>
    <property type="molecule type" value="Genomic_DNA"/>
</dbReference>
<dbReference type="RefSeq" id="WP_012065456.1">
    <property type="nucleotide sequence ID" value="NC_009633.1"/>
</dbReference>
<dbReference type="SMR" id="A6TWJ7"/>
<dbReference type="STRING" id="293826.Amet_4493"/>
<dbReference type="KEGG" id="amt:Amet_4493"/>
<dbReference type="eggNOG" id="COG0267">
    <property type="taxonomic scope" value="Bacteria"/>
</dbReference>
<dbReference type="HOGENOM" id="CLU_190949_0_2_9"/>
<dbReference type="Proteomes" id="UP000001572">
    <property type="component" value="Chromosome"/>
</dbReference>
<dbReference type="GO" id="GO:0005737">
    <property type="term" value="C:cytoplasm"/>
    <property type="evidence" value="ECO:0007669"/>
    <property type="project" value="UniProtKB-ARBA"/>
</dbReference>
<dbReference type="GO" id="GO:1990904">
    <property type="term" value="C:ribonucleoprotein complex"/>
    <property type="evidence" value="ECO:0007669"/>
    <property type="project" value="UniProtKB-KW"/>
</dbReference>
<dbReference type="GO" id="GO:0005840">
    <property type="term" value="C:ribosome"/>
    <property type="evidence" value="ECO:0007669"/>
    <property type="project" value="UniProtKB-KW"/>
</dbReference>
<dbReference type="GO" id="GO:0003735">
    <property type="term" value="F:structural constituent of ribosome"/>
    <property type="evidence" value="ECO:0007669"/>
    <property type="project" value="InterPro"/>
</dbReference>
<dbReference type="GO" id="GO:0006412">
    <property type="term" value="P:translation"/>
    <property type="evidence" value="ECO:0007669"/>
    <property type="project" value="UniProtKB-UniRule"/>
</dbReference>
<dbReference type="Gene3D" id="2.20.28.120">
    <property type="entry name" value="Ribosomal protein L33"/>
    <property type="match status" value="1"/>
</dbReference>
<dbReference type="HAMAP" id="MF_00294">
    <property type="entry name" value="Ribosomal_bL33"/>
    <property type="match status" value="1"/>
</dbReference>
<dbReference type="InterPro" id="IPR001705">
    <property type="entry name" value="Ribosomal_bL33"/>
</dbReference>
<dbReference type="InterPro" id="IPR018264">
    <property type="entry name" value="Ribosomal_bL33_CS"/>
</dbReference>
<dbReference type="InterPro" id="IPR038584">
    <property type="entry name" value="Ribosomal_bL33_sf"/>
</dbReference>
<dbReference type="InterPro" id="IPR011332">
    <property type="entry name" value="Ribosomal_zn-bd"/>
</dbReference>
<dbReference type="NCBIfam" id="NF001764">
    <property type="entry name" value="PRK00504.1"/>
    <property type="match status" value="1"/>
</dbReference>
<dbReference type="NCBIfam" id="NF001860">
    <property type="entry name" value="PRK00595.1"/>
    <property type="match status" value="1"/>
</dbReference>
<dbReference type="NCBIfam" id="TIGR01023">
    <property type="entry name" value="rpmG_bact"/>
    <property type="match status" value="1"/>
</dbReference>
<dbReference type="PANTHER" id="PTHR43168">
    <property type="entry name" value="50S RIBOSOMAL PROTEIN L33, CHLOROPLASTIC"/>
    <property type="match status" value="1"/>
</dbReference>
<dbReference type="PANTHER" id="PTHR43168:SF2">
    <property type="entry name" value="LARGE RIBOSOMAL SUBUNIT PROTEIN BL33C"/>
    <property type="match status" value="1"/>
</dbReference>
<dbReference type="Pfam" id="PF00471">
    <property type="entry name" value="Ribosomal_L33"/>
    <property type="match status" value="1"/>
</dbReference>
<dbReference type="SUPFAM" id="SSF57829">
    <property type="entry name" value="Zn-binding ribosomal proteins"/>
    <property type="match status" value="1"/>
</dbReference>
<dbReference type="PROSITE" id="PS00582">
    <property type="entry name" value="RIBOSOMAL_L33"/>
    <property type="match status" value="1"/>
</dbReference>
<evidence type="ECO:0000255" key="1">
    <source>
        <dbReference type="HAMAP-Rule" id="MF_00294"/>
    </source>
</evidence>
<evidence type="ECO:0000305" key="2"/>
<name>RL33_ALKMQ</name>
<accession>A6TWJ7</accession>
<organism>
    <name type="scientific">Alkaliphilus metalliredigens (strain QYMF)</name>
    <dbReference type="NCBI Taxonomy" id="293826"/>
    <lineage>
        <taxon>Bacteria</taxon>
        <taxon>Bacillati</taxon>
        <taxon>Bacillota</taxon>
        <taxon>Clostridia</taxon>
        <taxon>Peptostreptococcales</taxon>
        <taxon>Natronincolaceae</taxon>
        <taxon>Alkaliphilus</taxon>
    </lineage>
</organism>
<sequence>MRVKITLACTECKQRNYNTTKNKKNNPDRMEMQKHCKFCKSHTLHKETK</sequence>
<comment type="similarity">
    <text evidence="1">Belongs to the bacterial ribosomal protein bL33 family.</text>
</comment>
<keyword id="KW-1185">Reference proteome</keyword>
<keyword id="KW-0687">Ribonucleoprotein</keyword>
<keyword id="KW-0689">Ribosomal protein</keyword>